<organism>
    <name type="scientific">Mycobacterium sp. (strain JLS)</name>
    <dbReference type="NCBI Taxonomy" id="164757"/>
    <lineage>
        <taxon>Bacteria</taxon>
        <taxon>Bacillati</taxon>
        <taxon>Actinomycetota</taxon>
        <taxon>Actinomycetes</taxon>
        <taxon>Mycobacteriales</taxon>
        <taxon>Mycobacteriaceae</taxon>
        <taxon>Mycobacterium</taxon>
    </lineage>
</organism>
<protein>
    <recommendedName>
        <fullName evidence="1">Adenosine deaminase</fullName>
        <ecNumber evidence="1">3.5.4.4</ecNumber>
    </recommendedName>
    <alternativeName>
        <fullName evidence="1">Adenosine aminohydrolase</fullName>
    </alternativeName>
</protein>
<name>ADD_MYCSJ</name>
<evidence type="ECO:0000255" key="1">
    <source>
        <dbReference type="HAMAP-Rule" id="MF_00540"/>
    </source>
</evidence>
<accession>A3PVY4</accession>
<proteinExistence type="inferred from homology"/>
<sequence>MTTPLTLENISQAPKALLHDHLDGGLRPSTVLELAGQYGYDDLPADDVDELATFFRTAAHSGSLVRYLEPFAHTVGVMQTAEALHRVAFECVEDLAGDNVVYAEVRFAPELHIEGGMGLDAVVDAVLAGFADGEKAAASAGRTITVRCLVTAMRHAARSREIAELAIRFRDRGVVGFDIAGAEAGYPPTRHLDAFEYMRGNNARFTIHAGEAFGLPSIHEAIAFCGADRLGHGVRIVDDITVAPDGQVKLGRLAAILRDKRIPLELCPSSNVQTGAVASIAEHPFDLLARTRFRVTVNTDNRLMSDTTMSQEMLRLVEAFGYGWSDLARFTINAMKSSFIPFDERLALIDDVIKPRYAVLAG</sequence>
<reference key="1">
    <citation type="submission" date="2007-02" db="EMBL/GenBank/DDBJ databases">
        <title>Complete sequence of Mycobacterium sp. JLS.</title>
        <authorList>
            <consortium name="US DOE Joint Genome Institute"/>
            <person name="Copeland A."/>
            <person name="Lucas S."/>
            <person name="Lapidus A."/>
            <person name="Barry K."/>
            <person name="Detter J.C."/>
            <person name="Glavina del Rio T."/>
            <person name="Hammon N."/>
            <person name="Israni S."/>
            <person name="Dalin E."/>
            <person name="Tice H."/>
            <person name="Pitluck S."/>
            <person name="Chain P."/>
            <person name="Malfatti S."/>
            <person name="Shin M."/>
            <person name="Vergez L."/>
            <person name="Schmutz J."/>
            <person name="Larimer F."/>
            <person name="Land M."/>
            <person name="Hauser L."/>
            <person name="Kyrpides N."/>
            <person name="Mikhailova N."/>
            <person name="Miller C.D."/>
            <person name="Anderson A.J."/>
            <person name="Sims R.C."/>
            <person name="Richardson P."/>
        </authorList>
    </citation>
    <scope>NUCLEOTIDE SEQUENCE [LARGE SCALE GENOMIC DNA]</scope>
    <source>
        <strain>JLS</strain>
    </source>
</reference>
<feature type="chain" id="PRO_1000017670" description="Adenosine deaminase">
    <location>
        <begin position="1"/>
        <end position="362"/>
    </location>
</feature>
<feature type="active site" description="Proton donor" evidence="1">
    <location>
        <position position="211"/>
    </location>
</feature>
<feature type="binding site" evidence="1">
    <location>
        <position position="19"/>
    </location>
    <ligand>
        <name>Zn(2+)</name>
        <dbReference type="ChEBI" id="CHEBI:29105"/>
        <note>catalytic</note>
    </ligand>
</feature>
<feature type="binding site" evidence="1">
    <location>
        <position position="21"/>
    </location>
    <ligand>
        <name>substrate</name>
    </ligand>
</feature>
<feature type="binding site" evidence="1">
    <location>
        <position position="21"/>
    </location>
    <ligand>
        <name>Zn(2+)</name>
        <dbReference type="ChEBI" id="CHEBI:29105"/>
        <note>catalytic</note>
    </ligand>
</feature>
<feature type="binding site" evidence="1">
    <location>
        <position position="23"/>
    </location>
    <ligand>
        <name>substrate</name>
    </ligand>
</feature>
<feature type="binding site" evidence="1">
    <location>
        <position position="181"/>
    </location>
    <ligand>
        <name>substrate</name>
    </ligand>
</feature>
<feature type="binding site" evidence="1">
    <location>
        <position position="208"/>
    </location>
    <ligand>
        <name>Zn(2+)</name>
        <dbReference type="ChEBI" id="CHEBI:29105"/>
        <note>catalytic</note>
    </ligand>
</feature>
<feature type="binding site" evidence="1">
    <location>
        <position position="300"/>
    </location>
    <ligand>
        <name>Zn(2+)</name>
        <dbReference type="ChEBI" id="CHEBI:29105"/>
        <note>catalytic</note>
    </ligand>
</feature>
<feature type="site" description="Important for catalytic activity" evidence="1">
    <location>
        <position position="232"/>
    </location>
</feature>
<dbReference type="EC" id="3.5.4.4" evidence="1"/>
<dbReference type="EMBL" id="CP000580">
    <property type="protein sequence ID" value="ABN97061.1"/>
    <property type="molecule type" value="Genomic_DNA"/>
</dbReference>
<dbReference type="SMR" id="A3PVY4"/>
<dbReference type="KEGG" id="mjl:Mjls_1259"/>
<dbReference type="HOGENOM" id="CLU_039228_0_0_11"/>
<dbReference type="BioCyc" id="MSP164757:G1G8C-1271-MONOMER"/>
<dbReference type="GO" id="GO:0005829">
    <property type="term" value="C:cytosol"/>
    <property type="evidence" value="ECO:0007669"/>
    <property type="project" value="TreeGrafter"/>
</dbReference>
<dbReference type="GO" id="GO:0046936">
    <property type="term" value="F:2'-deoxyadenosine deaminase activity"/>
    <property type="evidence" value="ECO:0007669"/>
    <property type="project" value="RHEA"/>
</dbReference>
<dbReference type="GO" id="GO:0004000">
    <property type="term" value="F:adenosine deaminase activity"/>
    <property type="evidence" value="ECO:0007669"/>
    <property type="project" value="UniProtKB-UniRule"/>
</dbReference>
<dbReference type="GO" id="GO:0008270">
    <property type="term" value="F:zinc ion binding"/>
    <property type="evidence" value="ECO:0007669"/>
    <property type="project" value="UniProtKB-UniRule"/>
</dbReference>
<dbReference type="GO" id="GO:0006154">
    <property type="term" value="P:adenosine catabolic process"/>
    <property type="evidence" value="ECO:0007669"/>
    <property type="project" value="TreeGrafter"/>
</dbReference>
<dbReference type="GO" id="GO:0043103">
    <property type="term" value="P:hypoxanthine salvage"/>
    <property type="evidence" value="ECO:0007669"/>
    <property type="project" value="TreeGrafter"/>
</dbReference>
<dbReference type="GO" id="GO:0046103">
    <property type="term" value="P:inosine biosynthetic process"/>
    <property type="evidence" value="ECO:0007669"/>
    <property type="project" value="TreeGrafter"/>
</dbReference>
<dbReference type="GO" id="GO:0009117">
    <property type="term" value="P:nucleotide metabolic process"/>
    <property type="evidence" value="ECO:0007669"/>
    <property type="project" value="UniProtKB-KW"/>
</dbReference>
<dbReference type="GO" id="GO:0009168">
    <property type="term" value="P:purine ribonucleoside monophosphate biosynthetic process"/>
    <property type="evidence" value="ECO:0007669"/>
    <property type="project" value="UniProtKB-UniRule"/>
</dbReference>
<dbReference type="FunFam" id="3.20.20.140:FF:000020">
    <property type="entry name" value="Adenosine deaminase"/>
    <property type="match status" value="1"/>
</dbReference>
<dbReference type="Gene3D" id="3.20.20.140">
    <property type="entry name" value="Metal-dependent hydrolases"/>
    <property type="match status" value="1"/>
</dbReference>
<dbReference type="HAMAP" id="MF_00540">
    <property type="entry name" value="A_deaminase"/>
    <property type="match status" value="1"/>
</dbReference>
<dbReference type="InterPro" id="IPR028893">
    <property type="entry name" value="A_deaminase"/>
</dbReference>
<dbReference type="InterPro" id="IPR001365">
    <property type="entry name" value="A_deaminase_dom"/>
</dbReference>
<dbReference type="InterPro" id="IPR006330">
    <property type="entry name" value="Ado/ade_deaminase"/>
</dbReference>
<dbReference type="InterPro" id="IPR032466">
    <property type="entry name" value="Metal_Hydrolase"/>
</dbReference>
<dbReference type="NCBIfam" id="TIGR01430">
    <property type="entry name" value="aden_deam"/>
    <property type="match status" value="1"/>
</dbReference>
<dbReference type="NCBIfam" id="NF006847">
    <property type="entry name" value="PRK09358.1-2"/>
    <property type="match status" value="1"/>
</dbReference>
<dbReference type="PANTHER" id="PTHR11409">
    <property type="entry name" value="ADENOSINE DEAMINASE"/>
    <property type="match status" value="1"/>
</dbReference>
<dbReference type="PANTHER" id="PTHR11409:SF43">
    <property type="entry name" value="ADENOSINE DEAMINASE"/>
    <property type="match status" value="1"/>
</dbReference>
<dbReference type="Pfam" id="PF00962">
    <property type="entry name" value="A_deaminase"/>
    <property type="match status" value="1"/>
</dbReference>
<dbReference type="SUPFAM" id="SSF51556">
    <property type="entry name" value="Metallo-dependent hydrolases"/>
    <property type="match status" value="1"/>
</dbReference>
<keyword id="KW-0378">Hydrolase</keyword>
<keyword id="KW-0479">Metal-binding</keyword>
<keyword id="KW-0546">Nucleotide metabolism</keyword>
<keyword id="KW-0862">Zinc</keyword>
<gene>
    <name evidence="1" type="primary">add</name>
    <name type="ordered locus">Mjls_1259</name>
</gene>
<comment type="function">
    <text evidence="1">Catalyzes the hydrolytic deamination of adenosine and 2-deoxyadenosine.</text>
</comment>
<comment type="catalytic activity">
    <reaction evidence="1">
        <text>adenosine + H2O + H(+) = inosine + NH4(+)</text>
        <dbReference type="Rhea" id="RHEA:24408"/>
        <dbReference type="ChEBI" id="CHEBI:15377"/>
        <dbReference type="ChEBI" id="CHEBI:15378"/>
        <dbReference type="ChEBI" id="CHEBI:16335"/>
        <dbReference type="ChEBI" id="CHEBI:17596"/>
        <dbReference type="ChEBI" id="CHEBI:28938"/>
        <dbReference type="EC" id="3.5.4.4"/>
    </reaction>
    <physiologicalReaction direction="left-to-right" evidence="1">
        <dbReference type="Rhea" id="RHEA:24409"/>
    </physiologicalReaction>
</comment>
<comment type="catalytic activity">
    <reaction evidence="1">
        <text>2'-deoxyadenosine + H2O + H(+) = 2'-deoxyinosine + NH4(+)</text>
        <dbReference type="Rhea" id="RHEA:28190"/>
        <dbReference type="ChEBI" id="CHEBI:15377"/>
        <dbReference type="ChEBI" id="CHEBI:15378"/>
        <dbReference type="ChEBI" id="CHEBI:17256"/>
        <dbReference type="ChEBI" id="CHEBI:28938"/>
        <dbReference type="ChEBI" id="CHEBI:28997"/>
        <dbReference type="EC" id="3.5.4.4"/>
    </reaction>
    <physiologicalReaction direction="left-to-right" evidence="1">
        <dbReference type="Rhea" id="RHEA:28191"/>
    </physiologicalReaction>
</comment>
<comment type="cofactor">
    <cofactor evidence="1">
        <name>Zn(2+)</name>
        <dbReference type="ChEBI" id="CHEBI:29105"/>
    </cofactor>
    <text evidence="1">Binds 1 zinc ion per subunit.</text>
</comment>
<comment type="similarity">
    <text evidence="1">Belongs to the metallo-dependent hydrolases superfamily. Adenosine and AMP deaminases family. Adenosine deaminase subfamily.</text>
</comment>